<sequence>MNIIDHFEQENISKLTANKKIPDFEAGDTVKVTVKIIDRSIEKDGKEKLTERFQAYEGVVIAKRNRGITSSFLVRKISHGEGVERRFMTYSPIVHSIDVVKYGVVRRAKLYYLRQRSGKSARIKERHIPIAKTKAAKA</sequence>
<accession>Q4UNA7</accession>
<organism>
    <name type="scientific">Rickettsia felis (strain ATCC VR-1525 / URRWXCal2)</name>
    <name type="common">Rickettsia azadi</name>
    <dbReference type="NCBI Taxonomy" id="315456"/>
    <lineage>
        <taxon>Bacteria</taxon>
        <taxon>Pseudomonadati</taxon>
        <taxon>Pseudomonadota</taxon>
        <taxon>Alphaproteobacteria</taxon>
        <taxon>Rickettsiales</taxon>
        <taxon>Rickettsiaceae</taxon>
        <taxon>Rickettsieae</taxon>
        <taxon>Rickettsia</taxon>
        <taxon>spotted fever group</taxon>
    </lineage>
</organism>
<reference key="1">
    <citation type="journal article" date="2005" name="PLoS Biol.">
        <title>The genome sequence of Rickettsia felis identifies the first putative conjugative plasmid in an obligate intracellular parasite.</title>
        <authorList>
            <person name="Ogata H."/>
            <person name="Renesto P."/>
            <person name="Audic S."/>
            <person name="Robert C."/>
            <person name="Blanc G."/>
            <person name="Fournier P.-E."/>
            <person name="Parinello H."/>
            <person name="Claverie J.-M."/>
            <person name="Raoult D."/>
        </authorList>
    </citation>
    <scope>NUCLEOTIDE SEQUENCE [LARGE SCALE GENOMIC DNA]</scope>
    <source>
        <strain>ATCC VR-1525 / URRWXCal2</strain>
    </source>
</reference>
<protein>
    <recommendedName>
        <fullName evidence="1">Large ribosomal subunit protein bL19</fullName>
    </recommendedName>
    <alternativeName>
        <fullName evidence="2">50S ribosomal protein L19</fullName>
    </alternativeName>
</protein>
<gene>
    <name evidence="1" type="primary">rplS</name>
    <name type="ordered locus">RF_0100</name>
</gene>
<name>RL19_RICFE</name>
<feature type="chain" id="PRO_0000226869" description="Large ribosomal subunit protein bL19">
    <location>
        <begin position="1"/>
        <end position="138"/>
    </location>
</feature>
<dbReference type="EMBL" id="CP000053">
    <property type="protein sequence ID" value="AAY60951.1"/>
    <property type="molecule type" value="Genomic_DNA"/>
</dbReference>
<dbReference type="SMR" id="Q4UNA7"/>
<dbReference type="STRING" id="315456.RF_0100"/>
<dbReference type="KEGG" id="rfe:RF_0100"/>
<dbReference type="eggNOG" id="COG0335">
    <property type="taxonomic scope" value="Bacteria"/>
</dbReference>
<dbReference type="HOGENOM" id="CLU_103507_1_0_5"/>
<dbReference type="OrthoDB" id="9803541at2"/>
<dbReference type="Proteomes" id="UP000008548">
    <property type="component" value="Chromosome"/>
</dbReference>
<dbReference type="GO" id="GO:0022625">
    <property type="term" value="C:cytosolic large ribosomal subunit"/>
    <property type="evidence" value="ECO:0007669"/>
    <property type="project" value="TreeGrafter"/>
</dbReference>
<dbReference type="GO" id="GO:0003735">
    <property type="term" value="F:structural constituent of ribosome"/>
    <property type="evidence" value="ECO:0007669"/>
    <property type="project" value="InterPro"/>
</dbReference>
<dbReference type="GO" id="GO:0006412">
    <property type="term" value="P:translation"/>
    <property type="evidence" value="ECO:0007669"/>
    <property type="project" value="UniProtKB-UniRule"/>
</dbReference>
<dbReference type="Gene3D" id="2.30.30.790">
    <property type="match status" value="1"/>
</dbReference>
<dbReference type="HAMAP" id="MF_00402">
    <property type="entry name" value="Ribosomal_bL19"/>
    <property type="match status" value="1"/>
</dbReference>
<dbReference type="InterPro" id="IPR001857">
    <property type="entry name" value="Ribosomal_bL19"/>
</dbReference>
<dbReference type="InterPro" id="IPR018257">
    <property type="entry name" value="Ribosomal_bL19_CS"/>
</dbReference>
<dbReference type="InterPro" id="IPR038657">
    <property type="entry name" value="Ribosomal_bL19_sf"/>
</dbReference>
<dbReference type="InterPro" id="IPR008991">
    <property type="entry name" value="Translation_prot_SH3-like_sf"/>
</dbReference>
<dbReference type="NCBIfam" id="TIGR01024">
    <property type="entry name" value="rplS_bact"/>
    <property type="match status" value="1"/>
</dbReference>
<dbReference type="PANTHER" id="PTHR15680:SF9">
    <property type="entry name" value="LARGE RIBOSOMAL SUBUNIT PROTEIN BL19M"/>
    <property type="match status" value="1"/>
</dbReference>
<dbReference type="PANTHER" id="PTHR15680">
    <property type="entry name" value="RIBOSOMAL PROTEIN L19"/>
    <property type="match status" value="1"/>
</dbReference>
<dbReference type="Pfam" id="PF01245">
    <property type="entry name" value="Ribosomal_L19"/>
    <property type="match status" value="1"/>
</dbReference>
<dbReference type="PIRSF" id="PIRSF002191">
    <property type="entry name" value="Ribosomal_L19"/>
    <property type="match status" value="1"/>
</dbReference>
<dbReference type="PRINTS" id="PR00061">
    <property type="entry name" value="RIBOSOMALL19"/>
</dbReference>
<dbReference type="SUPFAM" id="SSF50104">
    <property type="entry name" value="Translation proteins SH3-like domain"/>
    <property type="match status" value="1"/>
</dbReference>
<dbReference type="PROSITE" id="PS01015">
    <property type="entry name" value="RIBOSOMAL_L19"/>
    <property type="match status" value="1"/>
</dbReference>
<comment type="function">
    <text evidence="1">This protein is located at the 30S-50S ribosomal subunit interface and may play a role in the structure and function of the aminoacyl-tRNA binding site.</text>
</comment>
<comment type="similarity">
    <text evidence="1">Belongs to the bacterial ribosomal protein bL19 family.</text>
</comment>
<keyword id="KW-0687">Ribonucleoprotein</keyword>
<keyword id="KW-0689">Ribosomal protein</keyword>
<evidence type="ECO:0000255" key="1">
    <source>
        <dbReference type="HAMAP-Rule" id="MF_00402"/>
    </source>
</evidence>
<evidence type="ECO:0000305" key="2"/>
<proteinExistence type="inferred from homology"/>